<name>HYPA_HELHP</name>
<accession>Q7VI03</accession>
<feature type="chain" id="PRO_0000129041" description="Hydrogenase maturation factor HypA">
    <location>
        <begin position="1"/>
        <end position="118"/>
    </location>
</feature>
<feature type="binding site" evidence="1">
    <location>
        <position position="2"/>
    </location>
    <ligand>
        <name>Ni(2+)</name>
        <dbReference type="ChEBI" id="CHEBI:49786"/>
    </ligand>
</feature>
<feature type="binding site" evidence="1">
    <location>
        <position position="74"/>
    </location>
    <ligand>
        <name>Zn(2+)</name>
        <dbReference type="ChEBI" id="CHEBI:29105"/>
    </ligand>
</feature>
<feature type="binding site" evidence="1">
    <location>
        <position position="77"/>
    </location>
    <ligand>
        <name>Zn(2+)</name>
        <dbReference type="ChEBI" id="CHEBI:29105"/>
    </ligand>
</feature>
<feature type="binding site" evidence="1">
    <location>
        <position position="91"/>
    </location>
    <ligand>
        <name>Zn(2+)</name>
        <dbReference type="ChEBI" id="CHEBI:29105"/>
    </ligand>
</feature>
<feature type="binding site" evidence="1">
    <location>
        <position position="94"/>
    </location>
    <ligand>
        <name>Zn(2+)</name>
        <dbReference type="ChEBI" id="CHEBI:29105"/>
    </ligand>
</feature>
<comment type="function">
    <text evidence="1">Involved in the maturation of [NiFe] hydrogenases. Required for nickel insertion into the metal center of the hydrogenase.</text>
</comment>
<comment type="disruption phenotype">
    <text evidence="2">Cells do not produce hydrogenase or urease; addition of Ni(2+) to cell cultures compensates only poorly for this loss of function. Normal amounts of apourease are produced by the cells.</text>
</comment>
<comment type="similarity">
    <text evidence="1">Belongs to the HypA/HybF family.</text>
</comment>
<comment type="sequence caution" evidence="3">
    <conflict type="erroneous initiation">
        <sequence resource="EMBL-CDS" id="AAP77405"/>
    </conflict>
</comment>
<keyword id="KW-0479">Metal-binding</keyword>
<keyword id="KW-0533">Nickel</keyword>
<keyword id="KW-1185">Reference proteome</keyword>
<keyword id="KW-0843">Virulence</keyword>
<keyword id="KW-0862">Zinc</keyword>
<protein>
    <recommendedName>
        <fullName evidence="1">Hydrogenase maturation factor HypA</fullName>
    </recommendedName>
</protein>
<proteinExistence type="inferred from homology"/>
<dbReference type="EMBL" id="AE017125">
    <property type="protein sequence ID" value="AAP77405.1"/>
    <property type="status" value="ALT_INIT"/>
    <property type="molecule type" value="Genomic_DNA"/>
</dbReference>
<dbReference type="RefSeq" id="WP_034365597.1">
    <property type="nucleotide sequence ID" value="NC_004917.1"/>
</dbReference>
<dbReference type="SMR" id="Q7VI03"/>
<dbReference type="STRING" id="235279.HH_0808"/>
<dbReference type="KEGG" id="hhe:HH_0808"/>
<dbReference type="eggNOG" id="COG0375">
    <property type="taxonomic scope" value="Bacteria"/>
</dbReference>
<dbReference type="HOGENOM" id="CLU_126929_6_0_7"/>
<dbReference type="OrthoDB" id="9800361at2"/>
<dbReference type="Proteomes" id="UP000002495">
    <property type="component" value="Chromosome"/>
</dbReference>
<dbReference type="GO" id="GO:0016151">
    <property type="term" value="F:nickel cation binding"/>
    <property type="evidence" value="ECO:0007669"/>
    <property type="project" value="UniProtKB-UniRule"/>
</dbReference>
<dbReference type="GO" id="GO:0008270">
    <property type="term" value="F:zinc ion binding"/>
    <property type="evidence" value="ECO:0007669"/>
    <property type="project" value="UniProtKB-UniRule"/>
</dbReference>
<dbReference type="GO" id="GO:0051604">
    <property type="term" value="P:protein maturation"/>
    <property type="evidence" value="ECO:0007669"/>
    <property type="project" value="InterPro"/>
</dbReference>
<dbReference type="GO" id="GO:0036211">
    <property type="term" value="P:protein modification process"/>
    <property type="evidence" value="ECO:0007669"/>
    <property type="project" value="UniProtKB-UniRule"/>
</dbReference>
<dbReference type="Gene3D" id="3.30.2320.80">
    <property type="match status" value="1"/>
</dbReference>
<dbReference type="HAMAP" id="MF_00213">
    <property type="entry name" value="HypA_HybF"/>
    <property type="match status" value="1"/>
</dbReference>
<dbReference type="InterPro" id="IPR000688">
    <property type="entry name" value="HypA/HybF"/>
</dbReference>
<dbReference type="NCBIfam" id="TIGR00100">
    <property type="entry name" value="hypA"/>
    <property type="match status" value="1"/>
</dbReference>
<dbReference type="NCBIfam" id="NF001839">
    <property type="entry name" value="PRK00564.1"/>
    <property type="match status" value="1"/>
</dbReference>
<dbReference type="PANTHER" id="PTHR34535">
    <property type="entry name" value="HYDROGENASE MATURATION FACTOR HYPA"/>
    <property type="match status" value="1"/>
</dbReference>
<dbReference type="PANTHER" id="PTHR34535:SF3">
    <property type="entry name" value="HYDROGENASE MATURATION FACTOR HYPA"/>
    <property type="match status" value="1"/>
</dbReference>
<dbReference type="Pfam" id="PF01155">
    <property type="entry name" value="HypA"/>
    <property type="match status" value="1"/>
</dbReference>
<dbReference type="PIRSF" id="PIRSF004761">
    <property type="entry name" value="Hydrgn_mat_HypA"/>
    <property type="match status" value="1"/>
</dbReference>
<organism>
    <name type="scientific">Helicobacter hepaticus (strain ATCC 51449 / 3B1)</name>
    <dbReference type="NCBI Taxonomy" id="235279"/>
    <lineage>
        <taxon>Bacteria</taxon>
        <taxon>Pseudomonadati</taxon>
        <taxon>Campylobacterota</taxon>
        <taxon>Epsilonproteobacteria</taxon>
        <taxon>Campylobacterales</taxon>
        <taxon>Helicobacteraceae</taxon>
        <taxon>Helicobacter</taxon>
    </lineage>
</organism>
<sequence>MHEYSIVASLIQMCESHAKEHNAASIAKVCIAVGERSGVDSALVKSAFETFRLDSPLCQNTILEIQSQSVELECRDCGHYFQAQNLTYSTCPQCQSHNVIIAKGKELHLLSLELDIQS</sequence>
<evidence type="ECO:0000255" key="1">
    <source>
        <dbReference type="HAMAP-Rule" id="MF_00213"/>
    </source>
</evidence>
<evidence type="ECO:0000269" key="2">
    <source>
    </source>
</evidence>
<evidence type="ECO:0000305" key="3"/>
<reference key="1">
    <citation type="journal article" date="2003" name="Proc. Natl. Acad. Sci. U.S.A.">
        <title>The complete genome sequence of the carcinogenic bacterium Helicobacter hepaticus.</title>
        <authorList>
            <person name="Suerbaum S."/>
            <person name="Josenhans C."/>
            <person name="Sterzenbach T."/>
            <person name="Drescher B."/>
            <person name="Brandt P."/>
            <person name="Bell M."/>
            <person name="Droege M."/>
            <person name="Fartmann B."/>
            <person name="Fischer H.-P."/>
            <person name="Ge Z."/>
            <person name="Hoerster A."/>
            <person name="Holland R."/>
            <person name="Klein K."/>
            <person name="Koenig J."/>
            <person name="Macko L."/>
            <person name="Mendz G.L."/>
            <person name="Nyakatura G."/>
            <person name="Schauer D.B."/>
            <person name="Shen Z."/>
            <person name="Weber J."/>
            <person name="Frosch M."/>
            <person name="Fox J.G."/>
        </authorList>
    </citation>
    <scope>NUCLEOTIDE SEQUENCE [LARGE SCALE GENOMIC DNA]</scope>
    <source>
        <strain>ATCC 51449 / 3B1</strain>
    </source>
</reference>
<reference key="2">
    <citation type="journal article" date="2007" name="Microbiology">
        <title>Nickel enzyme maturation in Helicobacter hepaticus: roles of accessory proteins in hydrogenase and urease activities.</title>
        <authorList>
            <person name="Benoit S.L."/>
            <person name="Zbell A.L."/>
            <person name="Maier R.J."/>
        </authorList>
    </citation>
    <scope>DISRUPTION PHENOTYPE</scope>
    <source>
        <strain>ATCC 51449 / 3B1</strain>
    </source>
</reference>
<reference key="3">
    <citation type="journal article" date="2007" name="FEMS Microbiol. Lett.">
        <title>Bacterial factors that mediate colonization of the stomach and virulence of Helicobacter pylori.</title>
        <authorList>
            <person name="Clyne M."/>
            <person name="Dolan B."/>
            <person name="Reeves E.P."/>
        </authorList>
    </citation>
    <scope>REVIEW ON VIRULENCE OF H.PYLORI</scope>
</reference>
<gene>
    <name evidence="1" type="primary">hypA</name>
    <name type="ordered locus">HH_0808</name>
</gene>